<proteinExistence type="inferred from homology"/>
<protein>
    <recommendedName>
        <fullName evidence="1">Protoheme IX farnesyltransferase</fullName>
        <ecNumber evidence="1">2.5.1.141</ecNumber>
    </recommendedName>
    <alternativeName>
        <fullName evidence="1">Heme B farnesyltransferase</fullName>
    </alternativeName>
    <alternativeName>
        <fullName evidence="1">Heme O synthase</fullName>
    </alternativeName>
</protein>
<evidence type="ECO:0000255" key="1">
    <source>
        <dbReference type="HAMAP-Rule" id="MF_00154"/>
    </source>
</evidence>
<dbReference type="EC" id="2.5.1.141" evidence="1"/>
<dbReference type="EMBL" id="AE017262">
    <property type="protein sequence ID" value="AAT04858.1"/>
    <property type="molecule type" value="Genomic_DNA"/>
</dbReference>
<dbReference type="SMR" id="Q71XV7"/>
<dbReference type="KEGG" id="lmf:LMOf2365_2088"/>
<dbReference type="HOGENOM" id="CLU_029631_0_0_9"/>
<dbReference type="UniPathway" id="UPA00834">
    <property type="reaction ID" value="UER00712"/>
</dbReference>
<dbReference type="GO" id="GO:0005886">
    <property type="term" value="C:plasma membrane"/>
    <property type="evidence" value="ECO:0007669"/>
    <property type="project" value="UniProtKB-SubCell"/>
</dbReference>
<dbReference type="GO" id="GO:0008495">
    <property type="term" value="F:protoheme IX farnesyltransferase activity"/>
    <property type="evidence" value="ECO:0007669"/>
    <property type="project" value="UniProtKB-UniRule"/>
</dbReference>
<dbReference type="GO" id="GO:0048034">
    <property type="term" value="P:heme O biosynthetic process"/>
    <property type="evidence" value="ECO:0007669"/>
    <property type="project" value="UniProtKB-UniRule"/>
</dbReference>
<dbReference type="CDD" id="cd13957">
    <property type="entry name" value="PT_UbiA_Cox10"/>
    <property type="match status" value="1"/>
</dbReference>
<dbReference type="FunFam" id="1.10.357.140:FF:000001">
    <property type="entry name" value="Protoheme IX farnesyltransferase"/>
    <property type="match status" value="1"/>
</dbReference>
<dbReference type="Gene3D" id="1.10.357.140">
    <property type="entry name" value="UbiA prenyltransferase"/>
    <property type="match status" value="1"/>
</dbReference>
<dbReference type="HAMAP" id="MF_00154">
    <property type="entry name" value="CyoE_CtaB"/>
    <property type="match status" value="1"/>
</dbReference>
<dbReference type="InterPro" id="IPR006369">
    <property type="entry name" value="Protohaem_IX_farnesylTrfase"/>
</dbReference>
<dbReference type="InterPro" id="IPR000537">
    <property type="entry name" value="UbiA_prenyltransferase"/>
</dbReference>
<dbReference type="InterPro" id="IPR030470">
    <property type="entry name" value="UbiA_prenylTrfase_CS"/>
</dbReference>
<dbReference type="InterPro" id="IPR044878">
    <property type="entry name" value="UbiA_sf"/>
</dbReference>
<dbReference type="NCBIfam" id="TIGR01473">
    <property type="entry name" value="cyoE_ctaB"/>
    <property type="match status" value="1"/>
</dbReference>
<dbReference type="PANTHER" id="PTHR43448">
    <property type="entry name" value="PROTOHEME IX FARNESYLTRANSFERASE, MITOCHONDRIAL"/>
    <property type="match status" value="1"/>
</dbReference>
<dbReference type="PANTHER" id="PTHR43448:SF2">
    <property type="entry name" value="PROTOHEME IX FARNESYLTRANSFERASE, MITOCHONDRIAL"/>
    <property type="match status" value="1"/>
</dbReference>
<dbReference type="Pfam" id="PF01040">
    <property type="entry name" value="UbiA"/>
    <property type="match status" value="1"/>
</dbReference>
<dbReference type="PROSITE" id="PS00943">
    <property type="entry name" value="UBIA"/>
    <property type="match status" value="1"/>
</dbReference>
<reference key="1">
    <citation type="journal article" date="2004" name="Nucleic Acids Res.">
        <title>Whole genome comparisons of serotype 4b and 1/2a strains of the food-borne pathogen Listeria monocytogenes reveal new insights into the core genome components of this species.</title>
        <authorList>
            <person name="Nelson K.E."/>
            <person name="Fouts D.E."/>
            <person name="Mongodin E.F."/>
            <person name="Ravel J."/>
            <person name="DeBoy R.T."/>
            <person name="Kolonay J.F."/>
            <person name="Rasko D.A."/>
            <person name="Angiuoli S.V."/>
            <person name="Gill S.R."/>
            <person name="Paulsen I.T."/>
            <person name="Peterson J.D."/>
            <person name="White O."/>
            <person name="Nelson W.C."/>
            <person name="Nierman W.C."/>
            <person name="Beanan M.J."/>
            <person name="Brinkac L.M."/>
            <person name="Daugherty S.C."/>
            <person name="Dodson R.J."/>
            <person name="Durkin A.S."/>
            <person name="Madupu R."/>
            <person name="Haft D.H."/>
            <person name="Selengut J."/>
            <person name="Van Aken S.E."/>
            <person name="Khouri H.M."/>
            <person name="Fedorova N."/>
            <person name="Forberger H.A."/>
            <person name="Tran B."/>
            <person name="Kathariou S."/>
            <person name="Wonderling L.D."/>
            <person name="Uhlich G.A."/>
            <person name="Bayles D.O."/>
            <person name="Luchansky J.B."/>
            <person name="Fraser C.M."/>
        </authorList>
    </citation>
    <scope>NUCLEOTIDE SEQUENCE [LARGE SCALE GENOMIC DNA]</scope>
    <source>
        <strain>F2365</strain>
    </source>
</reference>
<gene>
    <name evidence="1" type="primary">ctaB</name>
    <name type="ordered locus">LMOf2365_2088</name>
</gene>
<name>COXX_LISMF</name>
<keyword id="KW-1003">Cell membrane</keyword>
<keyword id="KW-0350">Heme biosynthesis</keyword>
<keyword id="KW-0472">Membrane</keyword>
<keyword id="KW-0808">Transferase</keyword>
<keyword id="KW-0812">Transmembrane</keyword>
<keyword id="KW-1133">Transmembrane helix</keyword>
<accession>Q71XV7</accession>
<comment type="function">
    <text evidence="1">Converts heme B (protoheme IX) to heme O by substitution of the vinyl group on carbon 2 of heme B porphyrin ring with a hydroxyethyl farnesyl side group.</text>
</comment>
<comment type="catalytic activity">
    <reaction evidence="1">
        <text>heme b + (2E,6E)-farnesyl diphosphate + H2O = Fe(II)-heme o + diphosphate</text>
        <dbReference type="Rhea" id="RHEA:28070"/>
        <dbReference type="ChEBI" id="CHEBI:15377"/>
        <dbReference type="ChEBI" id="CHEBI:33019"/>
        <dbReference type="ChEBI" id="CHEBI:60344"/>
        <dbReference type="ChEBI" id="CHEBI:60530"/>
        <dbReference type="ChEBI" id="CHEBI:175763"/>
        <dbReference type="EC" id="2.5.1.141"/>
    </reaction>
</comment>
<comment type="pathway">
    <text evidence="1">Porphyrin-containing compound metabolism; heme O biosynthesis; heme O from protoheme: step 1/1.</text>
</comment>
<comment type="subunit">
    <text evidence="1">Interacts with CtaA.</text>
</comment>
<comment type="subcellular location">
    <subcellularLocation>
        <location evidence="1">Cell membrane</location>
        <topology evidence="1">Multi-pass membrane protein</topology>
    </subcellularLocation>
</comment>
<comment type="miscellaneous">
    <text evidence="1">Carbon 2 of the heme B porphyrin ring is defined according to the Fischer nomenclature.</text>
</comment>
<comment type="similarity">
    <text evidence="1">Belongs to the UbiA prenyltransferase family. Protoheme IX farnesyltransferase subfamily.</text>
</comment>
<feature type="chain" id="PRO_0000327073" description="Protoheme IX farnesyltransferase">
    <location>
        <begin position="1"/>
        <end position="301"/>
    </location>
</feature>
<feature type="transmembrane region" description="Helical" evidence="1">
    <location>
        <begin position="20"/>
        <end position="42"/>
    </location>
</feature>
<feature type="transmembrane region" description="Helical" evidence="1">
    <location>
        <begin position="55"/>
        <end position="75"/>
    </location>
</feature>
<feature type="transmembrane region" description="Helical" evidence="1">
    <location>
        <begin position="105"/>
        <end position="125"/>
    </location>
</feature>
<feature type="transmembrane region" description="Helical" evidence="1">
    <location>
        <begin position="126"/>
        <end position="146"/>
    </location>
</feature>
<feature type="transmembrane region" description="Helical" evidence="1">
    <location>
        <begin position="150"/>
        <end position="172"/>
    </location>
</feature>
<feature type="transmembrane region" description="Helical" evidence="1">
    <location>
        <begin position="176"/>
        <end position="198"/>
    </location>
</feature>
<feature type="transmembrane region" description="Helical" evidence="1">
    <location>
        <begin position="227"/>
        <end position="247"/>
    </location>
</feature>
<feature type="transmembrane region" description="Helical" evidence="1">
    <location>
        <begin position="249"/>
        <end position="269"/>
    </location>
</feature>
<feature type="transmembrane region" description="Helical" evidence="1">
    <location>
        <begin position="280"/>
        <end position="300"/>
    </location>
</feature>
<sequence>MNQIEKTGELSASRFTVRDFTELVKIGIVNSNTITAFTGMWLAFQLNGISFIQNVDVIFFTIVGSALIVAASGAFNNVIDRDIDGIMERTKNRPTMTGKISGKRALMVALVLGVVGTIMLFMTTWQAGVLGVIGVFLYVVVYSLYAKRKLVSNTVIGSFSGAVPPLIGWFAVEPSFSIVPIMLFLVMFCWQPPHFYAIAIKRKEEYAAAGIPMLPVVKGIERTKKSMFFWVILLTILPFFMFELGIVYVVLATLLNIGWLALSIYGFKMEDSIKWAKWMFVYSLNYMTILFVAMVVISIFL</sequence>
<organism>
    <name type="scientific">Listeria monocytogenes serotype 4b (strain F2365)</name>
    <dbReference type="NCBI Taxonomy" id="265669"/>
    <lineage>
        <taxon>Bacteria</taxon>
        <taxon>Bacillati</taxon>
        <taxon>Bacillota</taxon>
        <taxon>Bacilli</taxon>
        <taxon>Bacillales</taxon>
        <taxon>Listeriaceae</taxon>
        <taxon>Listeria</taxon>
    </lineage>
</organism>